<comment type="function">
    <text evidence="1">Essential for recycling GMP and indirectly, cGMP.</text>
</comment>
<comment type="catalytic activity">
    <reaction evidence="1">
        <text>GMP + ATP = GDP + ADP</text>
        <dbReference type="Rhea" id="RHEA:20780"/>
        <dbReference type="ChEBI" id="CHEBI:30616"/>
        <dbReference type="ChEBI" id="CHEBI:58115"/>
        <dbReference type="ChEBI" id="CHEBI:58189"/>
        <dbReference type="ChEBI" id="CHEBI:456216"/>
        <dbReference type="EC" id="2.7.4.8"/>
    </reaction>
</comment>
<comment type="subcellular location">
    <subcellularLocation>
        <location evidence="1">Cytoplasm</location>
    </subcellularLocation>
</comment>
<comment type="similarity">
    <text evidence="1">Belongs to the guanylate kinase family.</text>
</comment>
<sequence length="207" mass="24023">MDNEKGLLIVLSGPSGVGKGTVRKRIFEDPSTSYKYSISMTTRQMREGEVDGVDYFFKTRDAFEALIKDDQFIEYAEYVGNYYGTPVQYVKDTMDEGHDVFLEIEVEGAKQVRKKFPDALFIFLAPPSLDHLRERLVGRGTESDEKIQSRINEARKEVEMMNLYDYVVVNDEVELAKNRIQCIVEAEHLKRERVEAKYRKMILEAKK</sequence>
<keyword id="KW-0067">ATP-binding</keyword>
<keyword id="KW-0963">Cytoplasm</keyword>
<keyword id="KW-0418">Kinase</keyword>
<keyword id="KW-0547">Nucleotide-binding</keyword>
<keyword id="KW-0808">Transferase</keyword>
<gene>
    <name evidence="1" type="primary">gmk</name>
    <name type="ordered locus">SAR1185</name>
</gene>
<evidence type="ECO:0000255" key="1">
    <source>
        <dbReference type="HAMAP-Rule" id="MF_00328"/>
    </source>
</evidence>
<protein>
    <recommendedName>
        <fullName evidence="1">Guanylate kinase</fullName>
        <ecNumber evidence="1">2.7.4.8</ecNumber>
    </recommendedName>
    <alternativeName>
        <fullName evidence="1">GMP kinase</fullName>
    </alternativeName>
</protein>
<accession>Q6GHM6</accession>
<proteinExistence type="inferred from homology"/>
<dbReference type="EC" id="2.7.4.8" evidence="1"/>
<dbReference type="EMBL" id="BX571856">
    <property type="protein sequence ID" value="CAG40187.1"/>
    <property type="molecule type" value="Genomic_DNA"/>
</dbReference>
<dbReference type="RefSeq" id="WP_000368225.1">
    <property type="nucleotide sequence ID" value="NC_002952.2"/>
</dbReference>
<dbReference type="SMR" id="Q6GHM6"/>
<dbReference type="KEGG" id="sar:SAR1185"/>
<dbReference type="HOGENOM" id="CLU_001715_1_2_9"/>
<dbReference type="Proteomes" id="UP000000596">
    <property type="component" value="Chromosome"/>
</dbReference>
<dbReference type="GO" id="GO:0005829">
    <property type="term" value="C:cytosol"/>
    <property type="evidence" value="ECO:0007669"/>
    <property type="project" value="TreeGrafter"/>
</dbReference>
<dbReference type="GO" id="GO:0005524">
    <property type="term" value="F:ATP binding"/>
    <property type="evidence" value="ECO:0007669"/>
    <property type="project" value="UniProtKB-UniRule"/>
</dbReference>
<dbReference type="GO" id="GO:0004385">
    <property type="term" value="F:guanylate kinase activity"/>
    <property type="evidence" value="ECO:0007669"/>
    <property type="project" value="UniProtKB-UniRule"/>
</dbReference>
<dbReference type="CDD" id="cd00071">
    <property type="entry name" value="GMPK"/>
    <property type="match status" value="1"/>
</dbReference>
<dbReference type="FunFam" id="3.40.50.300:FF:000855">
    <property type="entry name" value="Guanylate kinase"/>
    <property type="match status" value="1"/>
</dbReference>
<dbReference type="FunFam" id="3.30.63.10:FF:000002">
    <property type="entry name" value="Guanylate kinase 1"/>
    <property type="match status" value="1"/>
</dbReference>
<dbReference type="Gene3D" id="3.30.63.10">
    <property type="entry name" value="Guanylate Kinase phosphate binding domain"/>
    <property type="match status" value="1"/>
</dbReference>
<dbReference type="Gene3D" id="3.40.50.300">
    <property type="entry name" value="P-loop containing nucleotide triphosphate hydrolases"/>
    <property type="match status" value="1"/>
</dbReference>
<dbReference type="HAMAP" id="MF_00328">
    <property type="entry name" value="Guanylate_kinase"/>
    <property type="match status" value="1"/>
</dbReference>
<dbReference type="InterPro" id="IPR008145">
    <property type="entry name" value="GK/Ca_channel_bsu"/>
</dbReference>
<dbReference type="InterPro" id="IPR008144">
    <property type="entry name" value="Guanylate_kin-like_dom"/>
</dbReference>
<dbReference type="InterPro" id="IPR017665">
    <property type="entry name" value="Guanylate_kinase"/>
</dbReference>
<dbReference type="InterPro" id="IPR020590">
    <property type="entry name" value="Guanylate_kinase_CS"/>
</dbReference>
<dbReference type="InterPro" id="IPR027417">
    <property type="entry name" value="P-loop_NTPase"/>
</dbReference>
<dbReference type="NCBIfam" id="TIGR03263">
    <property type="entry name" value="guanyl_kin"/>
    <property type="match status" value="1"/>
</dbReference>
<dbReference type="PANTHER" id="PTHR23117:SF13">
    <property type="entry name" value="GUANYLATE KINASE"/>
    <property type="match status" value="1"/>
</dbReference>
<dbReference type="PANTHER" id="PTHR23117">
    <property type="entry name" value="GUANYLATE KINASE-RELATED"/>
    <property type="match status" value="1"/>
</dbReference>
<dbReference type="Pfam" id="PF00625">
    <property type="entry name" value="Guanylate_kin"/>
    <property type="match status" value="1"/>
</dbReference>
<dbReference type="SMART" id="SM00072">
    <property type="entry name" value="GuKc"/>
    <property type="match status" value="1"/>
</dbReference>
<dbReference type="SUPFAM" id="SSF52540">
    <property type="entry name" value="P-loop containing nucleoside triphosphate hydrolases"/>
    <property type="match status" value="1"/>
</dbReference>
<dbReference type="PROSITE" id="PS00856">
    <property type="entry name" value="GUANYLATE_KINASE_1"/>
    <property type="match status" value="1"/>
</dbReference>
<dbReference type="PROSITE" id="PS50052">
    <property type="entry name" value="GUANYLATE_KINASE_2"/>
    <property type="match status" value="1"/>
</dbReference>
<reference key="1">
    <citation type="journal article" date="2004" name="Proc. Natl. Acad. Sci. U.S.A.">
        <title>Complete genomes of two clinical Staphylococcus aureus strains: evidence for the rapid evolution of virulence and drug resistance.</title>
        <authorList>
            <person name="Holden M.T.G."/>
            <person name="Feil E.J."/>
            <person name="Lindsay J.A."/>
            <person name="Peacock S.J."/>
            <person name="Day N.P.J."/>
            <person name="Enright M.C."/>
            <person name="Foster T.J."/>
            <person name="Moore C.E."/>
            <person name="Hurst L."/>
            <person name="Atkin R."/>
            <person name="Barron A."/>
            <person name="Bason N."/>
            <person name="Bentley S.D."/>
            <person name="Chillingworth C."/>
            <person name="Chillingworth T."/>
            <person name="Churcher C."/>
            <person name="Clark L."/>
            <person name="Corton C."/>
            <person name="Cronin A."/>
            <person name="Doggett J."/>
            <person name="Dowd L."/>
            <person name="Feltwell T."/>
            <person name="Hance Z."/>
            <person name="Harris B."/>
            <person name="Hauser H."/>
            <person name="Holroyd S."/>
            <person name="Jagels K."/>
            <person name="James K.D."/>
            <person name="Lennard N."/>
            <person name="Line A."/>
            <person name="Mayes R."/>
            <person name="Moule S."/>
            <person name="Mungall K."/>
            <person name="Ormond D."/>
            <person name="Quail M.A."/>
            <person name="Rabbinowitsch E."/>
            <person name="Rutherford K.M."/>
            <person name="Sanders M."/>
            <person name="Sharp S."/>
            <person name="Simmonds M."/>
            <person name="Stevens K."/>
            <person name="Whitehead S."/>
            <person name="Barrell B.G."/>
            <person name="Spratt B.G."/>
            <person name="Parkhill J."/>
        </authorList>
    </citation>
    <scope>NUCLEOTIDE SEQUENCE [LARGE SCALE GENOMIC DNA]</scope>
    <source>
        <strain>MRSA252</strain>
    </source>
</reference>
<organism>
    <name type="scientific">Staphylococcus aureus (strain MRSA252)</name>
    <dbReference type="NCBI Taxonomy" id="282458"/>
    <lineage>
        <taxon>Bacteria</taxon>
        <taxon>Bacillati</taxon>
        <taxon>Bacillota</taxon>
        <taxon>Bacilli</taxon>
        <taxon>Bacillales</taxon>
        <taxon>Staphylococcaceae</taxon>
        <taxon>Staphylococcus</taxon>
    </lineage>
</organism>
<name>KGUA_STAAR</name>
<feature type="chain" id="PRO_0000170606" description="Guanylate kinase">
    <location>
        <begin position="1"/>
        <end position="207"/>
    </location>
</feature>
<feature type="domain" description="Guanylate kinase-like" evidence="1">
    <location>
        <begin position="6"/>
        <end position="185"/>
    </location>
</feature>
<feature type="binding site" evidence="1">
    <location>
        <begin position="13"/>
        <end position="20"/>
    </location>
    <ligand>
        <name>ATP</name>
        <dbReference type="ChEBI" id="CHEBI:30616"/>
    </ligand>
</feature>